<accession>B7M588</accession>
<keyword id="KW-0066">ATP synthesis</keyword>
<keyword id="KW-0067">ATP-binding</keyword>
<keyword id="KW-0997">Cell inner membrane</keyword>
<keyword id="KW-1003">Cell membrane</keyword>
<keyword id="KW-0139">CF(1)</keyword>
<keyword id="KW-0375">Hydrogen ion transport</keyword>
<keyword id="KW-0406">Ion transport</keyword>
<keyword id="KW-0472">Membrane</keyword>
<keyword id="KW-0547">Nucleotide-binding</keyword>
<keyword id="KW-1278">Translocase</keyword>
<keyword id="KW-0813">Transport</keyword>
<feature type="chain" id="PRO_1000143502" description="ATP synthase subunit beta">
    <location>
        <begin position="1"/>
        <end position="460"/>
    </location>
</feature>
<feature type="binding site" evidence="1">
    <location>
        <begin position="150"/>
        <end position="157"/>
    </location>
    <ligand>
        <name>ATP</name>
        <dbReference type="ChEBI" id="CHEBI:30616"/>
    </ligand>
</feature>
<proteinExistence type="inferred from homology"/>
<name>ATPB_ECO8A</name>
<protein>
    <recommendedName>
        <fullName evidence="1">ATP synthase subunit beta</fullName>
        <ecNumber evidence="1">7.1.2.2</ecNumber>
    </recommendedName>
    <alternativeName>
        <fullName evidence="1">ATP synthase F1 sector subunit beta</fullName>
    </alternativeName>
    <alternativeName>
        <fullName evidence="1">F-ATPase subunit beta</fullName>
    </alternativeName>
</protein>
<comment type="function">
    <text evidence="1">Produces ATP from ADP in the presence of a proton gradient across the membrane. The catalytic sites are hosted primarily by the beta subunits.</text>
</comment>
<comment type="catalytic activity">
    <reaction evidence="1">
        <text>ATP + H2O + 4 H(+)(in) = ADP + phosphate + 5 H(+)(out)</text>
        <dbReference type="Rhea" id="RHEA:57720"/>
        <dbReference type="ChEBI" id="CHEBI:15377"/>
        <dbReference type="ChEBI" id="CHEBI:15378"/>
        <dbReference type="ChEBI" id="CHEBI:30616"/>
        <dbReference type="ChEBI" id="CHEBI:43474"/>
        <dbReference type="ChEBI" id="CHEBI:456216"/>
        <dbReference type="EC" id="7.1.2.2"/>
    </reaction>
</comment>
<comment type="subunit">
    <text evidence="1">F-type ATPases have 2 components, CF(1) - the catalytic core - and CF(0) - the membrane proton channel. CF(1) has five subunits: alpha(3), beta(3), gamma(1), delta(1), epsilon(1). CF(0) has three main subunits: a(1), b(2) and c(9-12). The alpha and beta chains form an alternating ring which encloses part of the gamma chain. CF(1) is attached to CF(0) by a central stalk formed by the gamma and epsilon chains, while a peripheral stalk is formed by the delta and b chains.</text>
</comment>
<comment type="subcellular location">
    <subcellularLocation>
        <location evidence="1">Cell inner membrane</location>
        <topology evidence="1">Peripheral membrane protein</topology>
    </subcellularLocation>
</comment>
<comment type="similarity">
    <text evidence="1">Belongs to the ATPase alpha/beta chains family.</text>
</comment>
<dbReference type="EC" id="7.1.2.2" evidence="1"/>
<dbReference type="EMBL" id="CU928160">
    <property type="protein sequence ID" value="CAR00710.1"/>
    <property type="molecule type" value="Genomic_DNA"/>
</dbReference>
<dbReference type="RefSeq" id="WP_000190506.1">
    <property type="nucleotide sequence ID" value="NC_011741.1"/>
</dbReference>
<dbReference type="SMR" id="B7M588"/>
<dbReference type="GeneID" id="93778235"/>
<dbReference type="KEGG" id="ecr:ECIAI1_3916"/>
<dbReference type="HOGENOM" id="CLU_022398_0_2_6"/>
<dbReference type="GO" id="GO:0005886">
    <property type="term" value="C:plasma membrane"/>
    <property type="evidence" value="ECO:0007669"/>
    <property type="project" value="UniProtKB-SubCell"/>
</dbReference>
<dbReference type="GO" id="GO:0045259">
    <property type="term" value="C:proton-transporting ATP synthase complex"/>
    <property type="evidence" value="ECO:0007669"/>
    <property type="project" value="UniProtKB-KW"/>
</dbReference>
<dbReference type="GO" id="GO:0005524">
    <property type="term" value="F:ATP binding"/>
    <property type="evidence" value="ECO:0007669"/>
    <property type="project" value="UniProtKB-UniRule"/>
</dbReference>
<dbReference type="GO" id="GO:0016887">
    <property type="term" value="F:ATP hydrolysis activity"/>
    <property type="evidence" value="ECO:0007669"/>
    <property type="project" value="InterPro"/>
</dbReference>
<dbReference type="GO" id="GO:0046933">
    <property type="term" value="F:proton-transporting ATP synthase activity, rotational mechanism"/>
    <property type="evidence" value="ECO:0007669"/>
    <property type="project" value="UniProtKB-UniRule"/>
</dbReference>
<dbReference type="CDD" id="cd18110">
    <property type="entry name" value="ATP-synt_F1_beta_C"/>
    <property type="match status" value="1"/>
</dbReference>
<dbReference type="CDD" id="cd18115">
    <property type="entry name" value="ATP-synt_F1_beta_N"/>
    <property type="match status" value="1"/>
</dbReference>
<dbReference type="CDD" id="cd01133">
    <property type="entry name" value="F1-ATPase_beta_CD"/>
    <property type="match status" value="1"/>
</dbReference>
<dbReference type="FunFam" id="1.10.1140.10:FF:000001">
    <property type="entry name" value="ATP synthase subunit beta"/>
    <property type="match status" value="1"/>
</dbReference>
<dbReference type="FunFam" id="2.40.10.170:FF:000003">
    <property type="entry name" value="ATP synthase subunit beta"/>
    <property type="match status" value="1"/>
</dbReference>
<dbReference type="FunFam" id="3.40.50.300:FF:000004">
    <property type="entry name" value="ATP synthase subunit beta"/>
    <property type="match status" value="1"/>
</dbReference>
<dbReference type="Gene3D" id="2.40.10.170">
    <property type="match status" value="1"/>
</dbReference>
<dbReference type="Gene3D" id="1.10.1140.10">
    <property type="entry name" value="Bovine Mitochondrial F1-atpase, Atp Synthase Beta Chain, Chain D, domain 3"/>
    <property type="match status" value="1"/>
</dbReference>
<dbReference type="Gene3D" id="3.40.50.300">
    <property type="entry name" value="P-loop containing nucleotide triphosphate hydrolases"/>
    <property type="match status" value="1"/>
</dbReference>
<dbReference type="HAMAP" id="MF_01347">
    <property type="entry name" value="ATP_synth_beta_bact"/>
    <property type="match status" value="1"/>
</dbReference>
<dbReference type="InterPro" id="IPR003593">
    <property type="entry name" value="AAA+_ATPase"/>
</dbReference>
<dbReference type="InterPro" id="IPR055190">
    <property type="entry name" value="ATP-synt_VA_C"/>
</dbReference>
<dbReference type="InterPro" id="IPR005722">
    <property type="entry name" value="ATP_synth_F1_bsu"/>
</dbReference>
<dbReference type="InterPro" id="IPR020003">
    <property type="entry name" value="ATPase_a/bsu_AS"/>
</dbReference>
<dbReference type="InterPro" id="IPR050053">
    <property type="entry name" value="ATPase_alpha/beta_chains"/>
</dbReference>
<dbReference type="InterPro" id="IPR004100">
    <property type="entry name" value="ATPase_F1/V1/A1_a/bsu_N"/>
</dbReference>
<dbReference type="InterPro" id="IPR036121">
    <property type="entry name" value="ATPase_F1/V1/A1_a/bsu_N_sf"/>
</dbReference>
<dbReference type="InterPro" id="IPR000194">
    <property type="entry name" value="ATPase_F1/V1/A1_a/bsu_nucl-bd"/>
</dbReference>
<dbReference type="InterPro" id="IPR024034">
    <property type="entry name" value="ATPase_F1/V1_b/a_C"/>
</dbReference>
<dbReference type="InterPro" id="IPR027417">
    <property type="entry name" value="P-loop_NTPase"/>
</dbReference>
<dbReference type="NCBIfam" id="TIGR01039">
    <property type="entry name" value="atpD"/>
    <property type="match status" value="1"/>
</dbReference>
<dbReference type="PANTHER" id="PTHR15184">
    <property type="entry name" value="ATP SYNTHASE"/>
    <property type="match status" value="1"/>
</dbReference>
<dbReference type="PANTHER" id="PTHR15184:SF71">
    <property type="entry name" value="ATP SYNTHASE SUBUNIT BETA, MITOCHONDRIAL"/>
    <property type="match status" value="1"/>
</dbReference>
<dbReference type="Pfam" id="PF00006">
    <property type="entry name" value="ATP-synt_ab"/>
    <property type="match status" value="1"/>
</dbReference>
<dbReference type="Pfam" id="PF02874">
    <property type="entry name" value="ATP-synt_ab_N"/>
    <property type="match status" value="1"/>
</dbReference>
<dbReference type="Pfam" id="PF22919">
    <property type="entry name" value="ATP-synt_VA_C"/>
    <property type="match status" value="1"/>
</dbReference>
<dbReference type="SMART" id="SM00382">
    <property type="entry name" value="AAA"/>
    <property type="match status" value="1"/>
</dbReference>
<dbReference type="SUPFAM" id="SSF47917">
    <property type="entry name" value="C-terminal domain of alpha and beta subunits of F1 ATP synthase"/>
    <property type="match status" value="1"/>
</dbReference>
<dbReference type="SUPFAM" id="SSF50615">
    <property type="entry name" value="N-terminal domain of alpha and beta subunits of F1 ATP synthase"/>
    <property type="match status" value="1"/>
</dbReference>
<dbReference type="SUPFAM" id="SSF52540">
    <property type="entry name" value="P-loop containing nucleoside triphosphate hydrolases"/>
    <property type="match status" value="1"/>
</dbReference>
<dbReference type="PROSITE" id="PS00152">
    <property type="entry name" value="ATPASE_ALPHA_BETA"/>
    <property type="match status" value="1"/>
</dbReference>
<evidence type="ECO:0000255" key="1">
    <source>
        <dbReference type="HAMAP-Rule" id="MF_01347"/>
    </source>
</evidence>
<gene>
    <name evidence="1" type="primary">atpD</name>
    <name type="ordered locus">ECIAI1_3916</name>
</gene>
<sequence>MATGKIVQVIGAVVDVEFPQDAVPRVYDALEVQNGNERLVLEVQQQLGGGIVRTIAMGSSDGLRRGLDVKDLEHPIEVPVGKATLGRIMNVLGEPVDMKGEIGEEERWAIHRAAPSYEELSNSQELLETGIKVIDLMCPFAKGGKVGLFGGAGVGKTVNMMELIRNIAIEHSGYSVFAGVGERTREGNDFYHEMTDSNVIDKVSLVYGQMNEPPGNRLRVALTGLTMAEKFRDEGRDVLLFVDNIYRYTLAGTEVSALLGRMPSAVGYQPTLAEEMGVLQERITSTKTGSITSVQAVYVPADDLTDPSPATTFAHLDATVVLSRQIASLGIYPAVDPLDSTSRQLDPLVVGQEHYDTARGVQSILQRYQELKDIIAILGMDELSEEDKLVVARARKIQRFLSQPFFVAEVFTGSPGKYVSLKDTIRGFKGIMEGEYDHLPEQAFYMVGSIEEAVEKAKKL</sequence>
<reference key="1">
    <citation type="journal article" date="2009" name="PLoS Genet.">
        <title>Organised genome dynamics in the Escherichia coli species results in highly diverse adaptive paths.</title>
        <authorList>
            <person name="Touchon M."/>
            <person name="Hoede C."/>
            <person name="Tenaillon O."/>
            <person name="Barbe V."/>
            <person name="Baeriswyl S."/>
            <person name="Bidet P."/>
            <person name="Bingen E."/>
            <person name="Bonacorsi S."/>
            <person name="Bouchier C."/>
            <person name="Bouvet O."/>
            <person name="Calteau A."/>
            <person name="Chiapello H."/>
            <person name="Clermont O."/>
            <person name="Cruveiller S."/>
            <person name="Danchin A."/>
            <person name="Diard M."/>
            <person name="Dossat C."/>
            <person name="Karoui M.E."/>
            <person name="Frapy E."/>
            <person name="Garry L."/>
            <person name="Ghigo J.M."/>
            <person name="Gilles A.M."/>
            <person name="Johnson J."/>
            <person name="Le Bouguenec C."/>
            <person name="Lescat M."/>
            <person name="Mangenot S."/>
            <person name="Martinez-Jehanne V."/>
            <person name="Matic I."/>
            <person name="Nassif X."/>
            <person name="Oztas S."/>
            <person name="Petit M.A."/>
            <person name="Pichon C."/>
            <person name="Rouy Z."/>
            <person name="Ruf C.S."/>
            <person name="Schneider D."/>
            <person name="Tourret J."/>
            <person name="Vacherie B."/>
            <person name="Vallenet D."/>
            <person name="Medigue C."/>
            <person name="Rocha E.P.C."/>
            <person name="Denamur E."/>
        </authorList>
    </citation>
    <scope>NUCLEOTIDE SEQUENCE [LARGE SCALE GENOMIC DNA]</scope>
    <source>
        <strain>IAI1</strain>
    </source>
</reference>
<organism>
    <name type="scientific">Escherichia coli O8 (strain IAI1)</name>
    <dbReference type="NCBI Taxonomy" id="585034"/>
    <lineage>
        <taxon>Bacteria</taxon>
        <taxon>Pseudomonadati</taxon>
        <taxon>Pseudomonadota</taxon>
        <taxon>Gammaproteobacteria</taxon>
        <taxon>Enterobacterales</taxon>
        <taxon>Enterobacteriaceae</taxon>
        <taxon>Escherichia</taxon>
    </lineage>
</organism>